<name>MNMA_BACC1</name>
<reference key="1">
    <citation type="journal article" date="2004" name="Nucleic Acids Res.">
        <title>The genome sequence of Bacillus cereus ATCC 10987 reveals metabolic adaptations and a large plasmid related to Bacillus anthracis pXO1.</title>
        <authorList>
            <person name="Rasko D.A."/>
            <person name="Ravel J."/>
            <person name="Oekstad O.A."/>
            <person name="Helgason E."/>
            <person name="Cer R.Z."/>
            <person name="Jiang L."/>
            <person name="Shores K.A."/>
            <person name="Fouts D.E."/>
            <person name="Tourasse N.J."/>
            <person name="Angiuoli S.V."/>
            <person name="Kolonay J.F."/>
            <person name="Nelson W.C."/>
            <person name="Kolstoe A.-B."/>
            <person name="Fraser C.M."/>
            <person name="Read T.D."/>
        </authorList>
    </citation>
    <scope>NUCLEOTIDE SEQUENCE [LARGE SCALE GENOMIC DNA]</scope>
    <source>
        <strain>ATCC 10987 / NRS 248</strain>
    </source>
</reference>
<feature type="chain" id="PRO_0000121603" description="tRNA-specific 2-thiouridylase MnmA">
    <location>
        <begin position="1"/>
        <end position="371"/>
    </location>
</feature>
<feature type="region of interest" description="Interaction with target base in tRNA" evidence="1">
    <location>
        <begin position="99"/>
        <end position="101"/>
    </location>
</feature>
<feature type="region of interest" description="Interaction with tRNA" evidence="1">
    <location>
        <begin position="150"/>
        <end position="152"/>
    </location>
</feature>
<feature type="region of interest" description="Interaction with tRNA" evidence="1">
    <location>
        <begin position="308"/>
        <end position="309"/>
    </location>
</feature>
<feature type="active site" description="Nucleophile" evidence="1">
    <location>
        <position position="104"/>
    </location>
</feature>
<feature type="active site" description="Cysteine persulfide intermediate" evidence="1">
    <location>
        <position position="200"/>
    </location>
</feature>
<feature type="binding site" evidence="1">
    <location>
        <begin position="13"/>
        <end position="20"/>
    </location>
    <ligand>
        <name>ATP</name>
        <dbReference type="ChEBI" id="CHEBI:30616"/>
    </ligand>
</feature>
<feature type="binding site" evidence="1">
    <location>
        <position position="39"/>
    </location>
    <ligand>
        <name>ATP</name>
        <dbReference type="ChEBI" id="CHEBI:30616"/>
    </ligand>
</feature>
<feature type="binding site" evidence="1">
    <location>
        <position position="128"/>
    </location>
    <ligand>
        <name>ATP</name>
        <dbReference type="ChEBI" id="CHEBI:30616"/>
    </ligand>
</feature>
<feature type="site" description="Interaction with tRNA" evidence="1">
    <location>
        <position position="129"/>
    </location>
</feature>
<feature type="site" description="Interaction with tRNA" evidence="1">
    <location>
        <position position="341"/>
    </location>
</feature>
<feature type="disulfide bond" description="Alternate" evidence="1">
    <location>
        <begin position="104"/>
        <end position="200"/>
    </location>
</feature>
<proteinExistence type="inferred from homology"/>
<accession>Q730D7</accession>
<keyword id="KW-0067">ATP-binding</keyword>
<keyword id="KW-0963">Cytoplasm</keyword>
<keyword id="KW-1015">Disulfide bond</keyword>
<keyword id="KW-0547">Nucleotide-binding</keyword>
<keyword id="KW-0694">RNA-binding</keyword>
<keyword id="KW-0808">Transferase</keyword>
<keyword id="KW-0819">tRNA processing</keyword>
<keyword id="KW-0820">tRNA-binding</keyword>
<dbReference type="EC" id="2.8.1.13" evidence="1"/>
<dbReference type="EMBL" id="AE017194">
    <property type="protein sequence ID" value="AAS43380.1"/>
    <property type="molecule type" value="Genomic_DNA"/>
</dbReference>
<dbReference type="SMR" id="Q730D7"/>
<dbReference type="KEGG" id="bca:BCE_4479"/>
<dbReference type="HOGENOM" id="CLU_035188_1_0_9"/>
<dbReference type="Proteomes" id="UP000002527">
    <property type="component" value="Chromosome"/>
</dbReference>
<dbReference type="GO" id="GO:0005737">
    <property type="term" value="C:cytoplasm"/>
    <property type="evidence" value="ECO:0007669"/>
    <property type="project" value="UniProtKB-SubCell"/>
</dbReference>
<dbReference type="GO" id="GO:0005524">
    <property type="term" value="F:ATP binding"/>
    <property type="evidence" value="ECO:0007669"/>
    <property type="project" value="UniProtKB-KW"/>
</dbReference>
<dbReference type="GO" id="GO:0000049">
    <property type="term" value="F:tRNA binding"/>
    <property type="evidence" value="ECO:0007669"/>
    <property type="project" value="UniProtKB-KW"/>
</dbReference>
<dbReference type="GO" id="GO:0103016">
    <property type="term" value="F:tRNA-uridine 2-sulfurtransferase activity"/>
    <property type="evidence" value="ECO:0007669"/>
    <property type="project" value="UniProtKB-EC"/>
</dbReference>
<dbReference type="GO" id="GO:0002143">
    <property type="term" value="P:tRNA wobble position uridine thiolation"/>
    <property type="evidence" value="ECO:0007669"/>
    <property type="project" value="TreeGrafter"/>
</dbReference>
<dbReference type="CDD" id="cd01998">
    <property type="entry name" value="MnmA_TRMU-like"/>
    <property type="match status" value="1"/>
</dbReference>
<dbReference type="FunFam" id="2.30.30.280:FF:000001">
    <property type="entry name" value="tRNA-specific 2-thiouridylase MnmA"/>
    <property type="match status" value="1"/>
</dbReference>
<dbReference type="FunFam" id="2.40.30.10:FF:000023">
    <property type="entry name" value="tRNA-specific 2-thiouridylase MnmA"/>
    <property type="match status" value="1"/>
</dbReference>
<dbReference type="FunFam" id="3.40.50.620:FF:000004">
    <property type="entry name" value="tRNA-specific 2-thiouridylase MnmA"/>
    <property type="match status" value="1"/>
</dbReference>
<dbReference type="Gene3D" id="2.30.30.280">
    <property type="entry name" value="Adenine nucleotide alpha hydrolases-like domains"/>
    <property type="match status" value="1"/>
</dbReference>
<dbReference type="Gene3D" id="3.40.50.620">
    <property type="entry name" value="HUPs"/>
    <property type="match status" value="1"/>
</dbReference>
<dbReference type="Gene3D" id="2.40.30.10">
    <property type="entry name" value="Translation factors"/>
    <property type="match status" value="1"/>
</dbReference>
<dbReference type="HAMAP" id="MF_00144">
    <property type="entry name" value="tRNA_thiouridyl_MnmA"/>
    <property type="match status" value="1"/>
</dbReference>
<dbReference type="InterPro" id="IPR004506">
    <property type="entry name" value="MnmA-like"/>
</dbReference>
<dbReference type="InterPro" id="IPR046885">
    <property type="entry name" value="MnmA-like_C"/>
</dbReference>
<dbReference type="InterPro" id="IPR046884">
    <property type="entry name" value="MnmA-like_central"/>
</dbReference>
<dbReference type="InterPro" id="IPR023382">
    <property type="entry name" value="MnmA-like_central_sf"/>
</dbReference>
<dbReference type="InterPro" id="IPR014729">
    <property type="entry name" value="Rossmann-like_a/b/a_fold"/>
</dbReference>
<dbReference type="NCBIfam" id="NF001138">
    <property type="entry name" value="PRK00143.1"/>
    <property type="match status" value="1"/>
</dbReference>
<dbReference type="NCBIfam" id="TIGR00420">
    <property type="entry name" value="trmU"/>
    <property type="match status" value="1"/>
</dbReference>
<dbReference type="PANTHER" id="PTHR11933:SF5">
    <property type="entry name" value="MITOCHONDRIAL TRNA-SPECIFIC 2-THIOURIDYLASE 1"/>
    <property type="match status" value="1"/>
</dbReference>
<dbReference type="PANTHER" id="PTHR11933">
    <property type="entry name" value="TRNA 5-METHYLAMINOMETHYL-2-THIOURIDYLATE -METHYLTRANSFERASE"/>
    <property type="match status" value="1"/>
</dbReference>
<dbReference type="Pfam" id="PF03054">
    <property type="entry name" value="tRNA_Me_trans"/>
    <property type="match status" value="1"/>
</dbReference>
<dbReference type="Pfam" id="PF20258">
    <property type="entry name" value="tRNA_Me_trans_C"/>
    <property type="match status" value="1"/>
</dbReference>
<dbReference type="Pfam" id="PF20259">
    <property type="entry name" value="tRNA_Me_trans_M"/>
    <property type="match status" value="1"/>
</dbReference>
<dbReference type="SUPFAM" id="SSF52402">
    <property type="entry name" value="Adenine nucleotide alpha hydrolases-like"/>
    <property type="match status" value="1"/>
</dbReference>
<protein>
    <recommendedName>
        <fullName evidence="1">tRNA-specific 2-thiouridylase MnmA</fullName>
        <ecNumber evidence="1">2.8.1.13</ecNumber>
    </recommendedName>
</protein>
<comment type="function">
    <text evidence="1">Catalyzes the 2-thiolation of uridine at the wobble position (U34) of tRNA, leading to the formation of s(2)U34.</text>
</comment>
<comment type="catalytic activity">
    <reaction evidence="1">
        <text>S-sulfanyl-L-cysteinyl-[protein] + uridine(34) in tRNA + AH2 + ATP = 2-thiouridine(34) in tRNA + L-cysteinyl-[protein] + A + AMP + diphosphate + H(+)</text>
        <dbReference type="Rhea" id="RHEA:47032"/>
        <dbReference type="Rhea" id="RHEA-COMP:10131"/>
        <dbReference type="Rhea" id="RHEA-COMP:11726"/>
        <dbReference type="Rhea" id="RHEA-COMP:11727"/>
        <dbReference type="Rhea" id="RHEA-COMP:11728"/>
        <dbReference type="ChEBI" id="CHEBI:13193"/>
        <dbReference type="ChEBI" id="CHEBI:15378"/>
        <dbReference type="ChEBI" id="CHEBI:17499"/>
        <dbReference type="ChEBI" id="CHEBI:29950"/>
        <dbReference type="ChEBI" id="CHEBI:30616"/>
        <dbReference type="ChEBI" id="CHEBI:33019"/>
        <dbReference type="ChEBI" id="CHEBI:61963"/>
        <dbReference type="ChEBI" id="CHEBI:65315"/>
        <dbReference type="ChEBI" id="CHEBI:87170"/>
        <dbReference type="ChEBI" id="CHEBI:456215"/>
        <dbReference type="EC" id="2.8.1.13"/>
    </reaction>
</comment>
<comment type="subcellular location">
    <subcellularLocation>
        <location evidence="1">Cytoplasm</location>
    </subcellularLocation>
</comment>
<comment type="similarity">
    <text evidence="1">Belongs to the MnmA/TRMU family.</text>
</comment>
<gene>
    <name evidence="1" type="primary">mnmA</name>
    <name type="synonym">trmU</name>
    <name type="ordered locus">BCE_4479</name>
</gene>
<evidence type="ECO:0000255" key="1">
    <source>
        <dbReference type="HAMAP-Rule" id="MF_00144"/>
    </source>
</evidence>
<sequence>MNKLPHETRVVIGMSGGVDSSVAALLLKEQGYDVIGIFMKNWDDTDENGVCTATEDYNDVIEVCNQIGIPYYAVNFEKQYWDKVFTYFLDEYRAGRTPNPDVMCNKEIKFKAFLEHAIALGADYVATGHYARVAYMDGEYKMLRGVDDNKDQTYFLNQLSQEQLSKTMFPLGELKKPQIREMAKEAGLATAAKKDSTGICFIGERNFKDFLSNYLPAQPGVMQTLSGEVKGKHDGLMYYTIGQRHGLGIGGNGDPWFAVGKNLKENILYVDQGFHNELLYGDEVIATNVGWVSNKAKEKEFKCTAKFRYRQEDNKVTVQIVDENTVRILCDEPIRAITPGQAVVFYDGDECLGGATIDEVYRSGKKLDYLG</sequence>
<organism>
    <name type="scientific">Bacillus cereus (strain ATCC 10987 / NRS 248)</name>
    <dbReference type="NCBI Taxonomy" id="222523"/>
    <lineage>
        <taxon>Bacteria</taxon>
        <taxon>Bacillati</taxon>
        <taxon>Bacillota</taxon>
        <taxon>Bacilli</taxon>
        <taxon>Bacillales</taxon>
        <taxon>Bacillaceae</taxon>
        <taxon>Bacillus</taxon>
        <taxon>Bacillus cereus group</taxon>
    </lineage>
</organism>